<comment type="function">
    <text evidence="1">NDH shuttles electrons from NAD(P)H:plastoquinone, via FMN and iron-sulfur (Fe-S) centers, to quinones in the photosynthetic chain and possibly in a chloroplast respiratory chain. The immediate electron acceptor for the enzyme in this species is believed to be plastoquinone. Couples the redox reaction to proton translocation, and thus conserves the redox energy in a proton gradient.</text>
</comment>
<comment type="catalytic activity">
    <reaction evidence="1">
        <text>a plastoquinone + NADH + (n+1) H(+)(in) = a plastoquinol + NAD(+) + n H(+)(out)</text>
        <dbReference type="Rhea" id="RHEA:42608"/>
        <dbReference type="Rhea" id="RHEA-COMP:9561"/>
        <dbReference type="Rhea" id="RHEA-COMP:9562"/>
        <dbReference type="ChEBI" id="CHEBI:15378"/>
        <dbReference type="ChEBI" id="CHEBI:17757"/>
        <dbReference type="ChEBI" id="CHEBI:57540"/>
        <dbReference type="ChEBI" id="CHEBI:57945"/>
        <dbReference type="ChEBI" id="CHEBI:62192"/>
    </reaction>
</comment>
<comment type="catalytic activity">
    <reaction evidence="1">
        <text>a plastoquinone + NADPH + (n+1) H(+)(in) = a plastoquinol + NADP(+) + n H(+)(out)</text>
        <dbReference type="Rhea" id="RHEA:42612"/>
        <dbReference type="Rhea" id="RHEA-COMP:9561"/>
        <dbReference type="Rhea" id="RHEA-COMP:9562"/>
        <dbReference type="ChEBI" id="CHEBI:15378"/>
        <dbReference type="ChEBI" id="CHEBI:17757"/>
        <dbReference type="ChEBI" id="CHEBI:57783"/>
        <dbReference type="ChEBI" id="CHEBI:58349"/>
        <dbReference type="ChEBI" id="CHEBI:62192"/>
    </reaction>
</comment>
<comment type="cofactor">
    <cofactor evidence="1">
        <name>[4Fe-4S] cluster</name>
        <dbReference type="ChEBI" id="CHEBI:49883"/>
    </cofactor>
    <text evidence="1">Binds 2 [4Fe-4S] clusters per subunit.</text>
</comment>
<comment type="subunit">
    <text evidence="1">NDH is composed of at least 16 different subunits, 5 of which are encoded in the nucleus.</text>
</comment>
<comment type="subcellular location">
    <subcellularLocation>
        <location evidence="1">Plastid</location>
        <location evidence="1">Chloroplast thylakoid membrane</location>
        <topology evidence="1">Peripheral membrane protein</topology>
    </subcellularLocation>
</comment>
<comment type="similarity">
    <text evidence="1">Belongs to the complex I 23 kDa subunit family.</text>
</comment>
<name>NDHI_MELNV</name>
<feature type="chain" id="PRO_0000250816" description="NAD(P)H-quinone oxidoreductase subunit I, chloroplastic">
    <location>
        <begin position="1"/>
        <end position="166"/>
    </location>
</feature>
<feature type="domain" description="4Fe-4S ferredoxin-type 1" evidence="1">
    <location>
        <begin position="55"/>
        <end position="84"/>
    </location>
</feature>
<feature type="domain" description="4Fe-4S ferredoxin-type 2" evidence="1">
    <location>
        <begin position="95"/>
        <end position="124"/>
    </location>
</feature>
<feature type="binding site" evidence="1">
    <location>
        <position position="64"/>
    </location>
    <ligand>
        <name>[4Fe-4S] cluster</name>
        <dbReference type="ChEBI" id="CHEBI:49883"/>
        <label>1</label>
    </ligand>
</feature>
<feature type="binding site" evidence="1">
    <location>
        <position position="67"/>
    </location>
    <ligand>
        <name>[4Fe-4S] cluster</name>
        <dbReference type="ChEBI" id="CHEBI:49883"/>
        <label>1</label>
    </ligand>
</feature>
<feature type="binding site" evidence="1">
    <location>
        <position position="70"/>
    </location>
    <ligand>
        <name>[4Fe-4S] cluster</name>
        <dbReference type="ChEBI" id="CHEBI:49883"/>
        <label>1</label>
    </ligand>
</feature>
<feature type="binding site" evidence="1">
    <location>
        <position position="74"/>
    </location>
    <ligand>
        <name>[4Fe-4S] cluster</name>
        <dbReference type="ChEBI" id="CHEBI:49883"/>
        <label>2</label>
    </ligand>
</feature>
<feature type="binding site" evidence="1">
    <location>
        <position position="104"/>
    </location>
    <ligand>
        <name>[4Fe-4S] cluster</name>
        <dbReference type="ChEBI" id="CHEBI:49883"/>
        <label>2</label>
    </ligand>
</feature>
<feature type="binding site" evidence="1">
    <location>
        <position position="107"/>
    </location>
    <ligand>
        <name>[4Fe-4S] cluster</name>
        <dbReference type="ChEBI" id="CHEBI:49883"/>
        <label>2</label>
    </ligand>
</feature>
<feature type="binding site" evidence="1">
    <location>
        <position position="110"/>
    </location>
    <ligand>
        <name>[4Fe-4S] cluster</name>
        <dbReference type="ChEBI" id="CHEBI:49883"/>
        <label>2</label>
    </ligand>
</feature>
<feature type="binding site" evidence="1">
    <location>
        <position position="114"/>
    </location>
    <ligand>
        <name>[4Fe-4S] cluster</name>
        <dbReference type="ChEBI" id="CHEBI:49883"/>
        <label>1</label>
    </ligand>
</feature>
<geneLocation type="chloroplast"/>
<keyword id="KW-0004">4Fe-4S</keyword>
<keyword id="KW-0150">Chloroplast</keyword>
<keyword id="KW-0408">Iron</keyword>
<keyword id="KW-0411">Iron-sulfur</keyword>
<keyword id="KW-0472">Membrane</keyword>
<keyword id="KW-0479">Metal-binding</keyword>
<keyword id="KW-0520">NAD</keyword>
<keyword id="KW-0521">NADP</keyword>
<keyword id="KW-0934">Plastid</keyword>
<keyword id="KW-0618">Plastoquinone</keyword>
<keyword id="KW-0874">Quinone</keyword>
<keyword id="KW-0677">Repeat</keyword>
<keyword id="KW-0793">Thylakoid</keyword>
<keyword id="KW-1278">Translocase</keyword>
<accession>Q8HVN6</accession>
<reference key="1">
    <citation type="submission" date="2003-01" db="EMBL/GenBank/DDBJ databases">
        <title>Chloroplast DNA phylogeny of tribe Heliantheae (Asteraceae).</title>
        <authorList>
            <person name="Panero J.L."/>
            <person name="Baldwin B.G."/>
            <person name="Schilling E.E."/>
            <person name="Clevinger J.A."/>
        </authorList>
    </citation>
    <scope>NUCLEOTIDE SEQUENCE [GENOMIC DNA]</scope>
</reference>
<sequence length="166" mass="19489">MFPMVTEFMNYGQQTIRAARYIGQGFMITLSHANRLPVTIQYPYEKLITSERFRGRIHFEFDKCIACEVCVRVCPIDLPVVDWKLETDIRKKRLLNYSIDFGICIFCGNCVEYCPTNCLSMTEEYELSTYDRHELNYNQIALGRLPMSIIDDYTIRTILNLPEIKT</sequence>
<dbReference type="EC" id="7.1.1.-" evidence="1"/>
<dbReference type="EMBL" id="AF383818">
    <property type="protein sequence ID" value="AAN61768.1"/>
    <property type="molecule type" value="Genomic_DNA"/>
</dbReference>
<dbReference type="SMR" id="Q8HVN6"/>
<dbReference type="GO" id="GO:0009535">
    <property type="term" value="C:chloroplast thylakoid membrane"/>
    <property type="evidence" value="ECO:0007669"/>
    <property type="project" value="UniProtKB-SubCell"/>
</dbReference>
<dbReference type="GO" id="GO:0051539">
    <property type="term" value="F:4 iron, 4 sulfur cluster binding"/>
    <property type="evidence" value="ECO:0007669"/>
    <property type="project" value="UniProtKB-KW"/>
</dbReference>
<dbReference type="GO" id="GO:0005506">
    <property type="term" value="F:iron ion binding"/>
    <property type="evidence" value="ECO:0007669"/>
    <property type="project" value="UniProtKB-UniRule"/>
</dbReference>
<dbReference type="GO" id="GO:0008137">
    <property type="term" value="F:NADH dehydrogenase (ubiquinone) activity"/>
    <property type="evidence" value="ECO:0007669"/>
    <property type="project" value="InterPro"/>
</dbReference>
<dbReference type="GO" id="GO:0048038">
    <property type="term" value="F:quinone binding"/>
    <property type="evidence" value="ECO:0007669"/>
    <property type="project" value="UniProtKB-KW"/>
</dbReference>
<dbReference type="GO" id="GO:0019684">
    <property type="term" value="P:photosynthesis, light reaction"/>
    <property type="evidence" value="ECO:0007669"/>
    <property type="project" value="UniProtKB-UniRule"/>
</dbReference>
<dbReference type="FunFam" id="3.30.70.3270:FF:000006">
    <property type="entry name" value="NAD(P)H-quinone oxidoreductase subunit I, chloroplastic"/>
    <property type="match status" value="1"/>
</dbReference>
<dbReference type="Gene3D" id="3.30.70.3270">
    <property type="match status" value="1"/>
</dbReference>
<dbReference type="HAMAP" id="MF_01351">
    <property type="entry name" value="NDH1_NuoI"/>
    <property type="match status" value="1"/>
</dbReference>
<dbReference type="InterPro" id="IPR017896">
    <property type="entry name" value="4Fe4S_Fe-S-bd"/>
</dbReference>
<dbReference type="InterPro" id="IPR017900">
    <property type="entry name" value="4Fe4S_Fe_S_CS"/>
</dbReference>
<dbReference type="InterPro" id="IPR010226">
    <property type="entry name" value="NADH_quinone_OxRdtase_chainI"/>
</dbReference>
<dbReference type="InterPro" id="IPR004497">
    <property type="entry name" value="NDHI"/>
</dbReference>
<dbReference type="NCBIfam" id="TIGR00403">
    <property type="entry name" value="ndhI"/>
    <property type="match status" value="1"/>
</dbReference>
<dbReference type="NCBIfam" id="TIGR01971">
    <property type="entry name" value="NuoI"/>
    <property type="match status" value="1"/>
</dbReference>
<dbReference type="NCBIfam" id="NF004537">
    <property type="entry name" value="PRK05888.1-3"/>
    <property type="match status" value="1"/>
</dbReference>
<dbReference type="PANTHER" id="PTHR47275">
    <property type="entry name" value="NAD(P)H-QUINONE OXIDOREDUCTASE SUBUNIT I, CHLOROPLASTIC"/>
    <property type="match status" value="1"/>
</dbReference>
<dbReference type="PANTHER" id="PTHR47275:SF1">
    <property type="entry name" value="NAD(P)H-QUINONE OXIDOREDUCTASE SUBUNIT I, CHLOROPLASTIC"/>
    <property type="match status" value="1"/>
</dbReference>
<dbReference type="Pfam" id="PF00037">
    <property type="entry name" value="Fer4"/>
    <property type="match status" value="2"/>
</dbReference>
<dbReference type="SUPFAM" id="SSF54862">
    <property type="entry name" value="4Fe-4S ferredoxins"/>
    <property type="match status" value="1"/>
</dbReference>
<dbReference type="PROSITE" id="PS00198">
    <property type="entry name" value="4FE4S_FER_1"/>
    <property type="match status" value="2"/>
</dbReference>
<dbReference type="PROSITE" id="PS51379">
    <property type="entry name" value="4FE4S_FER_2"/>
    <property type="match status" value="2"/>
</dbReference>
<organism>
    <name type="scientific">Melanthera nivea</name>
    <name type="common">Snow squarestem</name>
    <name type="synonym">Bidens nivea</name>
    <dbReference type="NCBI Taxonomy" id="183050"/>
    <lineage>
        <taxon>Eukaryota</taxon>
        <taxon>Viridiplantae</taxon>
        <taxon>Streptophyta</taxon>
        <taxon>Embryophyta</taxon>
        <taxon>Tracheophyta</taxon>
        <taxon>Spermatophyta</taxon>
        <taxon>Magnoliopsida</taxon>
        <taxon>eudicotyledons</taxon>
        <taxon>Gunneridae</taxon>
        <taxon>Pentapetalae</taxon>
        <taxon>asterids</taxon>
        <taxon>campanulids</taxon>
        <taxon>Asterales</taxon>
        <taxon>Asteraceae</taxon>
        <taxon>Asteroideae</taxon>
        <taxon>Heliantheae alliance</taxon>
        <taxon>Heliantheae</taxon>
        <taxon>Melanthera</taxon>
    </lineage>
</organism>
<gene>
    <name evidence="1" type="primary">ndhI</name>
</gene>
<protein>
    <recommendedName>
        <fullName evidence="1">NAD(P)H-quinone oxidoreductase subunit I, chloroplastic</fullName>
        <ecNumber evidence="1">7.1.1.-</ecNumber>
    </recommendedName>
    <alternativeName>
        <fullName evidence="1">NAD(P)H dehydrogenase subunit I</fullName>
        <shortName evidence="1">NDH subunit I</shortName>
    </alternativeName>
    <alternativeName>
        <fullName evidence="1">NADH-plastoquinone oxidoreductase subunit I</fullName>
    </alternativeName>
</protein>
<proteinExistence type="inferred from homology"/>
<evidence type="ECO:0000255" key="1">
    <source>
        <dbReference type="HAMAP-Rule" id="MF_01351"/>
    </source>
</evidence>